<organism>
    <name type="scientific">Bacillus anthracis (strain CDC 684 / NRRL 3495)</name>
    <dbReference type="NCBI Taxonomy" id="568206"/>
    <lineage>
        <taxon>Bacteria</taxon>
        <taxon>Bacillati</taxon>
        <taxon>Bacillota</taxon>
        <taxon>Bacilli</taxon>
        <taxon>Bacillales</taxon>
        <taxon>Bacillaceae</taxon>
        <taxon>Bacillus</taxon>
        <taxon>Bacillus cereus group</taxon>
    </lineage>
</organism>
<keyword id="KW-0067">ATP-binding</keyword>
<keyword id="KW-0436">Ligase</keyword>
<keyword id="KW-0460">Magnesium</keyword>
<keyword id="KW-0479">Metal-binding</keyword>
<keyword id="KW-0520">NAD</keyword>
<keyword id="KW-0547">Nucleotide-binding</keyword>
<dbReference type="EC" id="6.3.1.5" evidence="1"/>
<dbReference type="EMBL" id="CP001215">
    <property type="protein sequence ID" value="ACP14978.1"/>
    <property type="molecule type" value="Genomic_DNA"/>
</dbReference>
<dbReference type="RefSeq" id="WP_000174879.1">
    <property type="nucleotide sequence ID" value="NC_012581.1"/>
</dbReference>
<dbReference type="SMR" id="C3L5J1"/>
<dbReference type="GeneID" id="75085226"/>
<dbReference type="KEGG" id="bah:BAMEG_2590"/>
<dbReference type="HOGENOM" id="CLU_059327_3_0_9"/>
<dbReference type="UniPathway" id="UPA00253">
    <property type="reaction ID" value="UER00333"/>
</dbReference>
<dbReference type="GO" id="GO:0005737">
    <property type="term" value="C:cytoplasm"/>
    <property type="evidence" value="ECO:0007669"/>
    <property type="project" value="InterPro"/>
</dbReference>
<dbReference type="GO" id="GO:0005524">
    <property type="term" value="F:ATP binding"/>
    <property type="evidence" value="ECO:0007669"/>
    <property type="project" value="UniProtKB-UniRule"/>
</dbReference>
<dbReference type="GO" id="GO:0004359">
    <property type="term" value="F:glutaminase activity"/>
    <property type="evidence" value="ECO:0007669"/>
    <property type="project" value="InterPro"/>
</dbReference>
<dbReference type="GO" id="GO:0046872">
    <property type="term" value="F:metal ion binding"/>
    <property type="evidence" value="ECO:0007669"/>
    <property type="project" value="UniProtKB-KW"/>
</dbReference>
<dbReference type="GO" id="GO:0003952">
    <property type="term" value="F:NAD+ synthase (glutamine-hydrolyzing) activity"/>
    <property type="evidence" value="ECO:0007669"/>
    <property type="project" value="InterPro"/>
</dbReference>
<dbReference type="GO" id="GO:0008795">
    <property type="term" value="F:NAD+ synthase activity"/>
    <property type="evidence" value="ECO:0007669"/>
    <property type="project" value="UniProtKB-UniRule"/>
</dbReference>
<dbReference type="GO" id="GO:0009435">
    <property type="term" value="P:NAD biosynthetic process"/>
    <property type="evidence" value="ECO:0007669"/>
    <property type="project" value="UniProtKB-UniRule"/>
</dbReference>
<dbReference type="CDD" id="cd00553">
    <property type="entry name" value="NAD_synthase"/>
    <property type="match status" value="1"/>
</dbReference>
<dbReference type="FunFam" id="3.40.50.620:FF:000015">
    <property type="entry name" value="NH(3)-dependent NAD(+) synthetase"/>
    <property type="match status" value="1"/>
</dbReference>
<dbReference type="Gene3D" id="3.40.50.620">
    <property type="entry name" value="HUPs"/>
    <property type="match status" value="1"/>
</dbReference>
<dbReference type="HAMAP" id="MF_00193">
    <property type="entry name" value="NadE_ammonia_dep"/>
    <property type="match status" value="1"/>
</dbReference>
<dbReference type="InterPro" id="IPR022310">
    <property type="entry name" value="NAD/GMP_synthase"/>
</dbReference>
<dbReference type="InterPro" id="IPR003694">
    <property type="entry name" value="NAD_synthase"/>
</dbReference>
<dbReference type="InterPro" id="IPR022926">
    <property type="entry name" value="NH(3)-dep_NAD(+)_synth"/>
</dbReference>
<dbReference type="InterPro" id="IPR014729">
    <property type="entry name" value="Rossmann-like_a/b/a_fold"/>
</dbReference>
<dbReference type="NCBIfam" id="TIGR00552">
    <property type="entry name" value="nadE"/>
    <property type="match status" value="1"/>
</dbReference>
<dbReference type="NCBIfam" id="NF001979">
    <property type="entry name" value="PRK00768.1"/>
    <property type="match status" value="1"/>
</dbReference>
<dbReference type="PANTHER" id="PTHR23090">
    <property type="entry name" value="NH 3 /GLUTAMINE-DEPENDENT NAD + SYNTHETASE"/>
    <property type="match status" value="1"/>
</dbReference>
<dbReference type="PANTHER" id="PTHR23090:SF7">
    <property type="entry name" value="NH(3)-DEPENDENT NAD(+) SYNTHETASE"/>
    <property type="match status" value="1"/>
</dbReference>
<dbReference type="Pfam" id="PF02540">
    <property type="entry name" value="NAD_synthase"/>
    <property type="match status" value="1"/>
</dbReference>
<dbReference type="SUPFAM" id="SSF52402">
    <property type="entry name" value="Adenine nucleotide alpha hydrolases-like"/>
    <property type="match status" value="1"/>
</dbReference>
<protein>
    <recommendedName>
        <fullName evidence="1">NH(3)-dependent NAD(+) synthetase</fullName>
        <ecNumber evidence="1">6.3.1.5</ecNumber>
    </recommendedName>
</protein>
<name>NADE_BACAC</name>
<evidence type="ECO:0000255" key="1">
    <source>
        <dbReference type="HAMAP-Rule" id="MF_00193"/>
    </source>
</evidence>
<feature type="chain" id="PRO_1000191495" description="NH(3)-dependent NAD(+) synthetase">
    <location>
        <begin position="1"/>
        <end position="272"/>
    </location>
</feature>
<feature type="binding site" evidence="1">
    <location>
        <begin position="45"/>
        <end position="52"/>
    </location>
    <ligand>
        <name>ATP</name>
        <dbReference type="ChEBI" id="CHEBI:30616"/>
    </ligand>
</feature>
<feature type="binding site" evidence="1">
    <location>
        <position position="51"/>
    </location>
    <ligand>
        <name>Mg(2+)</name>
        <dbReference type="ChEBI" id="CHEBI:18420"/>
    </ligand>
</feature>
<feature type="binding site" evidence="1">
    <location>
        <position position="138"/>
    </location>
    <ligand>
        <name>deamido-NAD(+)</name>
        <dbReference type="ChEBI" id="CHEBI:58437"/>
    </ligand>
</feature>
<feature type="binding site" evidence="1">
    <location>
        <position position="158"/>
    </location>
    <ligand>
        <name>ATP</name>
        <dbReference type="ChEBI" id="CHEBI:30616"/>
    </ligand>
</feature>
<feature type="binding site" evidence="1">
    <location>
        <position position="163"/>
    </location>
    <ligand>
        <name>Mg(2+)</name>
        <dbReference type="ChEBI" id="CHEBI:18420"/>
    </ligand>
</feature>
<feature type="binding site" evidence="1">
    <location>
        <position position="171"/>
    </location>
    <ligand>
        <name>deamido-NAD(+)</name>
        <dbReference type="ChEBI" id="CHEBI:58437"/>
    </ligand>
</feature>
<feature type="binding site" evidence="1">
    <location>
        <position position="178"/>
    </location>
    <ligand>
        <name>deamido-NAD(+)</name>
        <dbReference type="ChEBI" id="CHEBI:58437"/>
    </ligand>
</feature>
<feature type="binding site" evidence="1">
    <location>
        <position position="187"/>
    </location>
    <ligand>
        <name>ATP</name>
        <dbReference type="ChEBI" id="CHEBI:30616"/>
    </ligand>
</feature>
<feature type="binding site" evidence="1">
    <location>
        <position position="209"/>
    </location>
    <ligand>
        <name>ATP</name>
        <dbReference type="ChEBI" id="CHEBI:30616"/>
    </ligand>
</feature>
<feature type="binding site" evidence="1">
    <location>
        <begin position="258"/>
        <end position="259"/>
    </location>
    <ligand>
        <name>deamido-NAD(+)</name>
        <dbReference type="ChEBI" id="CHEBI:58437"/>
    </ligand>
</feature>
<gene>
    <name evidence="1" type="primary">nadE</name>
    <name type="ordered locus">BAMEG_2590</name>
</gene>
<sequence length="272" mass="30101">MTLQEQIMKALHVQPVIDPKAEIRKRVDFLKDYVKKTGAKGFVLGISGGQDSTLAGRLAQLAVEEIRNEGGNATFIAVRLPYKVQKDEDDAQLALQFIQADQSVAFDIASTVDAFSNQYENLLDESLTDFNKGNVKARIRMVTQYAIGGQKGLLVIGTDHAAEAVTGFFTKFGDGGADLLPLTGLTKRQGRALLQELGADERLYLKMPTADLLDEKPGQADETELGITYDQLDDYLEGKTVPADVAEKIEKRYTVSEHKRQVPASMFDDWWK</sequence>
<comment type="function">
    <text evidence="1">Catalyzes the ATP-dependent amidation of deamido-NAD to form NAD. Uses ammonia as a nitrogen source.</text>
</comment>
<comment type="catalytic activity">
    <reaction evidence="1">
        <text>deamido-NAD(+) + NH4(+) + ATP = AMP + diphosphate + NAD(+) + H(+)</text>
        <dbReference type="Rhea" id="RHEA:21188"/>
        <dbReference type="ChEBI" id="CHEBI:15378"/>
        <dbReference type="ChEBI" id="CHEBI:28938"/>
        <dbReference type="ChEBI" id="CHEBI:30616"/>
        <dbReference type="ChEBI" id="CHEBI:33019"/>
        <dbReference type="ChEBI" id="CHEBI:57540"/>
        <dbReference type="ChEBI" id="CHEBI:58437"/>
        <dbReference type="ChEBI" id="CHEBI:456215"/>
        <dbReference type="EC" id="6.3.1.5"/>
    </reaction>
</comment>
<comment type="pathway">
    <text evidence="1">Cofactor biosynthesis; NAD(+) biosynthesis; NAD(+) from deamido-NAD(+) (ammonia route): step 1/1.</text>
</comment>
<comment type="subunit">
    <text evidence="1">Homodimer.</text>
</comment>
<comment type="similarity">
    <text evidence="1">Belongs to the NAD synthetase family.</text>
</comment>
<proteinExistence type="inferred from homology"/>
<accession>C3L5J1</accession>
<reference key="1">
    <citation type="submission" date="2008-10" db="EMBL/GenBank/DDBJ databases">
        <title>Genome sequence of Bacillus anthracis str. CDC 684.</title>
        <authorList>
            <person name="Dodson R.J."/>
            <person name="Munk A.C."/>
            <person name="Brettin T."/>
            <person name="Bruce D."/>
            <person name="Detter C."/>
            <person name="Tapia R."/>
            <person name="Han C."/>
            <person name="Sutton G."/>
            <person name="Sims D."/>
        </authorList>
    </citation>
    <scope>NUCLEOTIDE SEQUENCE [LARGE SCALE GENOMIC DNA]</scope>
    <source>
        <strain>CDC 684 / NRRL 3495</strain>
    </source>
</reference>